<comment type="function">
    <text evidence="1">NADPH-dependent oxidoreductase which catalyzes the reduction of a variety of compounds bearing carbonyl groups including ketosteroids, alpha-dicarbonyl compounds, aldehydes, aromatic ketones and quinones. Reduces all-trans-retinal and 9-cis retinal. Reduces 3-ketosteroids and benzil into 3alpha-hydroxysteroids and S-benzoin, respectively, in contrast to the stereoselectivity of primates DHRS4s which produce 3beta-hydroxysteroids and R-benzoin. In the reverse reaction, catalyzes the NADP-dependent oxidation of 3alpha-hydroxysteroids and alcohol, but with much lower efficiency. Involved in the metabolism of 3alpha-hydroxysteroids, retinoid, isatin and xenobiotic carbonyl compounds.</text>
</comment>
<comment type="catalytic activity">
    <reaction evidence="1">
        <text>a secondary alcohol + NADP(+) = a ketone + NADPH + H(+)</text>
        <dbReference type="Rhea" id="RHEA:19257"/>
        <dbReference type="ChEBI" id="CHEBI:15378"/>
        <dbReference type="ChEBI" id="CHEBI:17087"/>
        <dbReference type="ChEBI" id="CHEBI:35681"/>
        <dbReference type="ChEBI" id="CHEBI:57783"/>
        <dbReference type="ChEBI" id="CHEBI:58349"/>
        <dbReference type="EC" id="1.1.1.184"/>
    </reaction>
    <physiologicalReaction direction="right-to-left" evidence="1">
        <dbReference type="Rhea" id="RHEA:19259"/>
    </physiologicalReaction>
</comment>
<comment type="catalytic activity">
    <reaction evidence="1">
        <text>3alpha-hydroxy-5beta-pregnan-20-one + NADP(+) = 5beta-pregnan-3,20-dione + NADPH + H(+)</text>
        <dbReference type="Rhea" id="RHEA:69016"/>
        <dbReference type="ChEBI" id="CHEBI:1712"/>
        <dbReference type="ChEBI" id="CHEBI:15378"/>
        <dbReference type="ChEBI" id="CHEBI:30154"/>
        <dbReference type="ChEBI" id="CHEBI:57783"/>
        <dbReference type="ChEBI" id="CHEBI:58349"/>
    </reaction>
    <physiologicalReaction direction="left-to-right" evidence="1">
        <dbReference type="Rhea" id="RHEA:69017"/>
    </physiologicalReaction>
</comment>
<comment type="catalytic activity">
    <reaction evidence="1">
        <text>5beta-dihydrotestosterone + NADPH + H(+) = 5beta-androstane-3alpha,17beta-diol + NADP(+)</text>
        <dbReference type="Rhea" id="RHEA:69028"/>
        <dbReference type="ChEBI" id="CHEBI:2150"/>
        <dbReference type="ChEBI" id="CHEBI:15378"/>
        <dbReference type="ChEBI" id="CHEBI:36714"/>
        <dbReference type="ChEBI" id="CHEBI:57783"/>
        <dbReference type="ChEBI" id="CHEBI:58349"/>
    </reaction>
    <physiologicalReaction direction="left-to-right" evidence="1">
        <dbReference type="Rhea" id="RHEA:69029"/>
    </physiologicalReaction>
</comment>
<comment type="catalytic activity">
    <reaction evidence="1">
        <text>all-trans-retinol + NADP(+) = all-trans-retinal + NADPH + H(+)</text>
        <dbReference type="Rhea" id="RHEA:25033"/>
        <dbReference type="ChEBI" id="CHEBI:15378"/>
        <dbReference type="ChEBI" id="CHEBI:17336"/>
        <dbReference type="ChEBI" id="CHEBI:17898"/>
        <dbReference type="ChEBI" id="CHEBI:57783"/>
        <dbReference type="ChEBI" id="CHEBI:58349"/>
        <dbReference type="EC" id="1.1.1.300"/>
    </reaction>
    <physiologicalReaction direction="right-to-left" evidence="1">
        <dbReference type="Rhea" id="RHEA:25035"/>
    </physiologicalReaction>
</comment>
<comment type="catalytic activity">
    <reaction evidence="1">
        <text>isatin + NADPH + H(+) = 3-hydroxyindolin-2-one + NADP(+)</text>
        <dbReference type="Rhea" id="RHEA:68608"/>
        <dbReference type="ChEBI" id="CHEBI:15378"/>
        <dbReference type="ChEBI" id="CHEBI:27539"/>
        <dbReference type="ChEBI" id="CHEBI:28536"/>
        <dbReference type="ChEBI" id="CHEBI:57783"/>
        <dbReference type="ChEBI" id="CHEBI:58349"/>
    </reaction>
    <physiologicalReaction direction="left-to-right" evidence="1">
        <dbReference type="Rhea" id="RHEA:68609"/>
    </physiologicalReaction>
</comment>
<comment type="subunit">
    <text evidence="1">Homotetramer.</text>
</comment>
<comment type="subcellular location">
    <subcellularLocation>
        <location evidence="1">Peroxisome</location>
    </subcellularLocation>
</comment>
<comment type="domain">
    <text evidence="1">The C-terminus peroxisomal targeting signal tripeptide is important for peroxisomal import. Once in the peroxisome, it is involved in intersubunit interactions.</text>
</comment>
<comment type="domain">
    <text evidence="1">Three specific residues, Phe-177, Leu-180 and Asn-196 are conserved between non-primate mammals whereas the respective residues are serine, phenylalanine and threonine in primates. The two residues at positions 177 and 180 are molecular determinants responsible for the stereoselective reduction of 3-ketosteroids and benzil. The presence of an asparagine at position 196 is important for the maintenance of the quaternary structure resulting in stability at cold temperature and improved catalytic activity toward retinal.</text>
</comment>
<comment type="miscellaneous">
    <text evidence="1">Primate DHRS4s display different stereoselectivity and catalytic efficiency in the oxidoreduction of some substrates as compared to other mammal DHRS4s due to a difference in conserved amino acid residues.</text>
</comment>
<comment type="similarity">
    <text evidence="6">Belongs to the short-chain dehydrogenases/reductases (SDR) family.</text>
</comment>
<comment type="sequence caution" evidence="6">
    <conflict type="erroneous initiation">
        <sequence resource="EMBL-CDS" id="AAL93248"/>
    </conflict>
    <text>Truncated N-terminus.</text>
</comment>
<sequence>MLKVGLPLGACARSWKSVRMASCGMARRNPLDNKVALVTASTDGIGFAIARRLAQDGAHVVVSSRKQQNVDRAVATLKGEGLSVTGTVCHVGKAEDRERLVATAVKLHGGVDILISNAAVSPFFGSLMDVPEEVWDKILDVNVKATALLTKAVVPEMAKRGGGSIVIVSSIAAYSPFPSLGPYNVSKTALLGLTKNLALELAESNVRVNCLAPGLIRTSFSRVLWEDPARQESIKATFQIKRIGKPEECAGIVSFLCSEDASYITGETVVVAGGSLSHL</sequence>
<reference key="1">
    <citation type="submission" date="2006-01" db="EMBL/GenBank/DDBJ databases">
        <authorList>
            <consortium name="NIH - Mammalian Gene Collection (MGC) project"/>
        </authorList>
    </citation>
    <scope>NUCLEOTIDE SEQUENCE [LARGE SCALE MRNA]</scope>
    <source>
        <strain>Hereford</strain>
        <tissue>Heart ventricle</tissue>
    </source>
</reference>
<reference key="2">
    <citation type="submission" date="2002-02" db="EMBL/GenBank/DDBJ databases">
        <title>Bos taurus NDRD mRNA for NADPH-dependent retinol dehydrogenase/reductase.</title>
        <authorList>
            <person name="Wang G.L."/>
            <person name="Liu G.F."/>
            <person name="Du J."/>
            <person name="Xu X.L."/>
            <person name="Gasana V."/>
            <person name="Wang B."/>
            <person name="Zhu L."/>
            <person name="Huang D.Y."/>
        </authorList>
    </citation>
    <scope>NUCLEOTIDE SEQUENCE [MRNA] OF 13-279</scope>
    <source>
        <tissue>Liver</tissue>
    </source>
</reference>
<gene>
    <name type="primary">DHRS4</name>
    <name type="synonym">NDRD</name>
</gene>
<proteinExistence type="evidence at transcript level"/>
<evidence type="ECO:0000250" key="1">
    <source>
        <dbReference type="UniProtKB" id="Q8WNV7"/>
    </source>
</evidence>
<evidence type="ECO:0000250" key="2">
    <source>
        <dbReference type="UniProtKB" id="Q99714"/>
    </source>
</evidence>
<evidence type="ECO:0000250" key="3">
    <source>
        <dbReference type="UniProtKB" id="Q99LB2"/>
    </source>
</evidence>
<evidence type="ECO:0000250" key="4">
    <source>
        <dbReference type="UniProtKB" id="Q9BTZ2"/>
    </source>
</evidence>
<evidence type="ECO:0000255" key="5">
    <source>
        <dbReference type="PROSITE-ProRule" id="PRU10001"/>
    </source>
</evidence>
<evidence type="ECO:0000305" key="6"/>
<name>DHRS4_BOVIN</name>
<keyword id="KW-0007">Acetylation</keyword>
<keyword id="KW-0521">NADP</keyword>
<keyword id="KW-0560">Oxidoreductase</keyword>
<keyword id="KW-0576">Peroxisome</keyword>
<keyword id="KW-0597">Phosphoprotein</keyword>
<keyword id="KW-1185">Reference proteome</keyword>
<feature type="chain" id="PRO_0000054646" description="Dehydrogenase/reductase SDR family member 4">
    <location>
        <begin position="1"/>
        <end position="279"/>
    </location>
</feature>
<feature type="short sequence motif" description="Peroxisomal targeting signal">
    <location>
        <begin position="277"/>
        <end position="279"/>
    </location>
</feature>
<feature type="active site" description="Proton acceptor" evidence="5">
    <location>
        <position position="183"/>
    </location>
</feature>
<feature type="binding site" evidence="1">
    <location>
        <begin position="37"/>
        <end position="61"/>
    </location>
    <ligand>
        <name>NADP(+)</name>
        <dbReference type="ChEBI" id="CHEBI:58349"/>
    </ligand>
</feature>
<feature type="binding site" evidence="2">
    <location>
        <position position="170"/>
    </location>
    <ligand>
        <name>substrate</name>
    </ligand>
</feature>
<feature type="binding site" evidence="1">
    <location>
        <position position="187"/>
    </location>
    <ligand>
        <name>NADP(+)</name>
        <dbReference type="ChEBI" id="CHEBI:58349"/>
    </ligand>
</feature>
<feature type="site" description="Responsible for the stereoselective reduction of 3-ketosteroids into 3alpha-hydroxysteroids and benzil into S-benzoin" evidence="1">
    <location>
        <position position="177"/>
    </location>
</feature>
<feature type="site" description="Responsible for the stereoselective reduction of 3-ketosteroids into 3alpha-hydroxysteroids and benzil into S-benzoin" evidence="1">
    <location>
        <position position="180"/>
    </location>
</feature>
<feature type="site" description="Important for the maintenance of the quaternary structure, the catalytic activity and cold stability" evidence="1">
    <location>
        <position position="196"/>
    </location>
</feature>
<feature type="modified residue" description="N6-acetyllysine; alternate" evidence="3">
    <location>
        <position position="93"/>
    </location>
</feature>
<feature type="modified residue" description="N6-succinyllysine; alternate" evidence="3">
    <location>
        <position position="93"/>
    </location>
</feature>
<feature type="modified residue" description="N6-acetyllysine" evidence="3">
    <location>
        <position position="106"/>
    </location>
</feature>
<feature type="modified residue" description="Phosphoserine" evidence="3">
    <location>
        <position position="221"/>
    </location>
</feature>
<feature type="modified residue" description="N6-succinyllysine" evidence="3">
    <location>
        <position position="235"/>
    </location>
</feature>
<feature type="sequence conflict" description="In Ref. 1; AAI12879." evidence="6" ref="1">
    <original>G</original>
    <variation>A</variation>
    <location>
        <position position="79"/>
    </location>
</feature>
<dbReference type="EC" id="1.1.1.184" evidence="1"/>
<dbReference type="EC" id="1.1.1.300" evidence="1"/>
<dbReference type="EMBL" id="BC112878">
    <property type="protein sequence ID" value="AAI12879.1"/>
    <property type="molecule type" value="mRNA"/>
</dbReference>
<dbReference type="EMBL" id="AF487454">
    <property type="protein sequence ID" value="AAL93248.1"/>
    <property type="status" value="ALT_INIT"/>
    <property type="molecule type" value="mRNA"/>
</dbReference>
<dbReference type="RefSeq" id="NP_777247.2">
    <property type="nucleotide sequence ID" value="NM_174822.3"/>
</dbReference>
<dbReference type="SMR" id="Q8SPU8"/>
<dbReference type="FunCoup" id="Q8SPU8">
    <property type="interactions" value="1921"/>
</dbReference>
<dbReference type="IntAct" id="Q8SPU8">
    <property type="interactions" value="1"/>
</dbReference>
<dbReference type="STRING" id="9913.ENSBTAP00000023493"/>
<dbReference type="PaxDb" id="9913-ENSBTAP00000023493"/>
<dbReference type="PeptideAtlas" id="Q8SPU8"/>
<dbReference type="GeneID" id="281360"/>
<dbReference type="KEGG" id="bta:281360"/>
<dbReference type="CTD" id="10901"/>
<dbReference type="eggNOG" id="KOG0725">
    <property type="taxonomic scope" value="Eukaryota"/>
</dbReference>
<dbReference type="InParanoid" id="Q8SPU8"/>
<dbReference type="OrthoDB" id="3592703at2759"/>
<dbReference type="Proteomes" id="UP000009136">
    <property type="component" value="Unplaced"/>
</dbReference>
<dbReference type="GO" id="GO:0005739">
    <property type="term" value="C:mitochondrion"/>
    <property type="evidence" value="ECO:0000250"/>
    <property type="project" value="UniProtKB"/>
</dbReference>
<dbReference type="GO" id="GO:0005777">
    <property type="term" value="C:peroxisome"/>
    <property type="evidence" value="ECO:0000250"/>
    <property type="project" value="UniProtKB"/>
</dbReference>
<dbReference type="GO" id="GO:0052650">
    <property type="term" value="F:all-trans-retinol dehydrogenase (NADP+) activity"/>
    <property type="evidence" value="ECO:0000250"/>
    <property type="project" value="UniProtKB"/>
</dbReference>
<dbReference type="GO" id="GO:0004090">
    <property type="term" value="F:carbonyl reductase (NADPH) activity"/>
    <property type="evidence" value="ECO:0000318"/>
    <property type="project" value="GO_Central"/>
</dbReference>
<dbReference type="GO" id="GO:0042802">
    <property type="term" value="F:identical protein binding"/>
    <property type="evidence" value="ECO:0000250"/>
    <property type="project" value="UniProtKB"/>
</dbReference>
<dbReference type="GO" id="GO:0042180">
    <property type="term" value="P:ketone metabolic process"/>
    <property type="evidence" value="ECO:0000250"/>
    <property type="project" value="UniProtKB"/>
</dbReference>
<dbReference type="GO" id="GO:0042574">
    <property type="term" value="P:retinal metabolic process"/>
    <property type="evidence" value="ECO:0000318"/>
    <property type="project" value="GO_Central"/>
</dbReference>
<dbReference type="GO" id="GO:0001523">
    <property type="term" value="P:retinoid metabolic process"/>
    <property type="evidence" value="ECO:0000250"/>
    <property type="project" value="UniProtKB"/>
</dbReference>
<dbReference type="GO" id="GO:0008202">
    <property type="term" value="P:steroid metabolic process"/>
    <property type="evidence" value="ECO:0000250"/>
    <property type="project" value="UniProtKB"/>
</dbReference>
<dbReference type="CDD" id="cd08936">
    <property type="entry name" value="CR_SDR_c"/>
    <property type="match status" value="1"/>
</dbReference>
<dbReference type="FunFam" id="3.40.50.720:FF:000084">
    <property type="entry name" value="Short-chain dehydrogenase reductase"/>
    <property type="match status" value="1"/>
</dbReference>
<dbReference type="Gene3D" id="3.40.50.720">
    <property type="entry name" value="NAD(P)-binding Rossmann-like Domain"/>
    <property type="match status" value="1"/>
</dbReference>
<dbReference type="InterPro" id="IPR036291">
    <property type="entry name" value="NAD(P)-bd_dom_sf"/>
</dbReference>
<dbReference type="InterPro" id="IPR020904">
    <property type="entry name" value="Sc_DH/Rdtase_CS"/>
</dbReference>
<dbReference type="InterPro" id="IPR002347">
    <property type="entry name" value="SDR_fam"/>
</dbReference>
<dbReference type="NCBIfam" id="NF005559">
    <property type="entry name" value="PRK07231.1"/>
    <property type="match status" value="1"/>
</dbReference>
<dbReference type="PANTHER" id="PTHR43943">
    <property type="entry name" value="DEHYDROGENASE/REDUCTASE (SDR FAMILY) MEMBER 4"/>
    <property type="match status" value="1"/>
</dbReference>
<dbReference type="PANTHER" id="PTHR43943:SF8">
    <property type="entry name" value="DEHYDROGENASE_REDUCTASE SDR FAMILY MEMBER 4-RELATED"/>
    <property type="match status" value="1"/>
</dbReference>
<dbReference type="Pfam" id="PF13561">
    <property type="entry name" value="adh_short_C2"/>
    <property type="match status" value="1"/>
</dbReference>
<dbReference type="PRINTS" id="PR00081">
    <property type="entry name" value="GDHRDH"/>
</dbReference>
<dbReference type="PRINTS" id="PR00080">
    <property type="entry name" value="SDRFAMILY"/>
</dbReference>
<dbReference type="SUPFAM" id="SSF51735">
    <property type="entry name" value="NAD(P)-binding Rossmann-fold domains"/>
    <property type="match status" value="1"/>
</dbReference>
<dbReference type="PROSITE" id="PS00061">
    <property type="entry name" value="ADH_SHORT"/>
    <property type="match status" value="1"/>
</dbReference>
<organism>
    <name type="scientific">Bos taurus</name>
    <name type="common">Bovine</name>
    <dbReference type="NCBI Taxonomy" id="9913"/>
    <lineage>
        <taxon>Eukaryota</taxon>
        <taxon>Metazoa</taxon>
        <taxon>Chordata</taxon>
        <taxon>Craniata</taxon>
        <taxon>Vertebrata</taxon>
        <taxon>Euteleostomi</taxon>
        <taxon>Mammalia</taxon>
        <taxon>Eutheria</taxon>
        <taxon>Laurasiatheria</taxon>
        <taxon>Artiodactyla</taxon>
        <taxon>Ruminantia</taxon>
        <taxon>Pecora</taxon>
        <taxon>Bovidae</taxon>
        <taxon>Bovinae</taxon>
        <taxon>Bos</taxon>
    </lineage>
</organism>
<protein>
    <recommendedName>
        <fullName evidence="1">Dehydrogenase/reductase SDR family member 4</fullName>
        <ecNumber evidence="1">1.1.1.184</ecNumber>
        <ecNumber evidence="1">1.1.1.300</ecNumber>
    </recommendedName>
    <alternativeName>
        <fullName evidence="1">NADPH-dependent carbonyl reductase</fullName>
        <shortName evidence="1">CR</shortName>
    </alternativeName>
    <alternativeName>
        <fullName evidence="1">NADPH-dependent retinol dehydrogenase/reductase</fullName>
        <shortName evidence="1">NDRD</shortName>
    </alternativeName>
    <alternativeName>
        <fullName>Peroxisomal short-chain alcohol dehydrogenase</fullName>
        <shortName>PSCD</shortName>
    </alternativeName>
    <alternativeName>
        <fullName evidence="4">Short chain dehydrogenase/reductase family 25C member 2</fullName>
        <shortName evidence="4">Protein SDR25C2</shortName>
    </alternativeName>
</protein>
<accession>Q8SPU8</accession>
<accession>Q2KHU6</accession>